<sequence>MFRGATLVNLDSKGRLSVPTRYREQLLENAAGQMVCTIDIHHPCLLLYPLPEWEIIEQKLSRLLSMNPVERRVQRLLLGHASECQMDGAGRLLIAPVLRQHAGLTKEVMLVGQFNKFELWDETTWHQQVKEDIDAEQLATGDLSERLQDLSL</sequence>
<accession>Q83MG1</accession>
<accession>Q7UDS7</accession>
<dbReference type="EMBL" id="AE005674">
    <property type="protein sequence ID" value="AAN41743.2"/>
    <property type="molecule type" value="Genomic_DNA"/>
</dbReference>
<dbReference type="EMBL" id="AE014073">
    <property type="protein sequence ID" value="AAP15624.1"/>
    <property type="molecule type" value="Genomic_DNA"/>
</dbReference>
<dbReference type="RefSeq" id="WP_005053563.1">
    <property type="nucleotide sequence ID" value="NZ_WPGW01000007.1"/>
</dbReference>
<dbReference type="SMR" id="Q83MG1"/>
<dbReference type="STRING" id="198214.SF0078"/>
<dbReference type="PaxDb" id="198214-SF0078"/>
<dbReference type="KEGG" id="sfl:SF0078"/>
<dbReference type="KEGG" id="sfx:S0080"/>
<dbReference type="PATRIC" id="fig|198214.7.peg.93"/>
<dbReference type="HOGENOM" id="CLU_107907_2_0_6"/>
<dbReference type="Proteomes" id="UP000001006">
    <property type="component" value="Chromosome"/>
</dbReference>
<dbReference type="Proteomes" id="UP000002673">
    <property type="component" value="Chromosome"/>
</dbReference>
<dbReference type="GO" id="GO:0005737">
    <property type="term" value="C:cytoplasm"/>
    <property type="evidence" value="ECO:0007669"/>
    <property type="project" value="UniProtKB-UniRule"/>
</dbReference>
<dbReference type="GO" id="GO:0009295">
    <property type="term" value="C:nucleoid"/>
    <property type="evidence" value="ECO:0007669"/>
    <property type="project" value="UniProtKB-SubCell"/>
</dbReference>
<dbReference type="GO" id="GO:0003700">
    <property type="term" value="F:DNA-binding transcription factor activity"/>
    <property type="evidence" value="ECO:0007669"/>
    <property type="project" value="UniProtKB-UniRule"/>
</dbReference>
<dbReference type="GO" id="GO:0000976">
    <property type="term" value="F:transcription cis-regulatory region binding"/>
    <property type="evidence" value="ECO:0007669"/>
    <property type="project" value="TreeGrafter"/>
</dbReference>
<dbReference type="GO" id="GO:2000143">
    <property type="term" value="P:negative regulation of DNA-templated transcription initiation"/>
    <property type="evidence" value="ECO:0007669"/>
    <property type="project" value="TreeGrafter"/>
</dbReference>
<dbReference type="CDD" id="cd16321">
    <property type="entry name" value="MraZ_C"/>
    <property type="match status" value="1"/>
</dbReference>
<dbReference type="CDD" id="cd16320">
    <property type="entry name" value="MraZ_N"/>
    <property type="match status" value="1"/>
</dbReference>
<dbReference type="FunFam" id="3.40.1550.20:FF:000001">
    <property type="entry name" value="Transcriptional regulator MraZ"/>
    <property type="match status" value="1"/>
</dbReference>
<dbReference type="Gene3D" id="3.40.1550.20">
    <property type="entry name" value="Transcriptional regulator MraZ domain"/>
    <property type="match status" value="1"/>
</dbReference>
<dbReference type="HAMAP" id="MF_01008">
    <property type="entry name" value="MraZ"/>
    <property type="match status" value="1"/>
</dbReference>
<dbReference type="InterPro" id="IPR003444">
    <property type="entry name" value="MraZ"/>
</dbReference>
<dbReference type="InterPro" id="IPR035644">
    <property type="entry name" value="MraZ_C"/>
</dbReference>
<dbReference type="InterPro" id="IPR020603">
    <property type="entry name" value="MraZ_dom"/>
</dbReference>
<dbReference type="InterPro" id="IPR035642">
    <property type="entry name" value="MraZ_N"/>
</dbReference>
<dbReference type="InterPro" id="IPR038619">
    <property type="entry name" value="MraZ_sf"/>
</dbReference>
<dbReference type="InterPro" id="IPR007159">
    <property type="entry name" value="SpoVT-AbrB_dom"/>
</dbReference>
<dbReference type="InterPro" id="IPR037914">
    <property type="entry name" value="SpoVT-AbrB_sf"/>
</dbReference>
<dbReference type="NCBIfam" id="TIGR00242">
    <property type="entry name" value="division/cell wall cluster transcriptional repressor MraZ"/>
    <property type="match status" value="1"/>
</dbReference>
<dbReference type="PANTHER" id="PTHR34701">
    <property type="entry name" value="TRANSCRIPTIONAL REGULATOR MRAZ"/>
    <property type="match status" value="1"/>
</dbReference>
<dbReference type="PANTHER" id="PTHR34701:SF1">
    <property type="entry name" value="TRANSCRIPTIONAL REGULATOR MRAZ"/>
    <property type="match status" value="1"/>
</dbReference>
<dbReference type="Pfam" id="PF02381">
    <property type="entry name" value="MraZ"/>
    <property type="match status" value="2"/>
</dbReference>
<dbReference type="SUPFAM" id="SSF89447">
    <property type="entry name" value="AbrB/MazE/MraZ-like"/>
    <property type="match status" value="1"/>
</dbReference>
<dbReference type="PROSITE" id="PS51740">
    <property type="entry name" value="SPOVT_ABRB"/>
    <property type="match status" value="2"/>
</dbReference>
<evidence type="ECO:0000255" key="1">
    <source>
        <dbReference type="HAMAP-Rule" id="MF_01008"/>
    </source>
</evidence>
<evidence type="ECO:0000255" key="2">
    <source>
        <dbReference type="PROSITE-ProRule" id="PRU01076"/>
    </source>
</evidence>
<keyword id="KW-0963">Cytoplasm</keyword>
<keyword id="KW-0238">DNA-binding</keyword>
<keyword id="KW-1185">Reference proteome</keyword>
<keyword id="KW-0677">Repeat</keyword>
<keyword id="KW-0678">Repressor</keyword>
<keyword id="KW-0804">Transcription</keyword>
<keyword id="KW-0805">Transcription regulation</keyword>
<gene>
    <name evidence="1" type="primary">mraZ</name>
    <name type="ordered locus">SF0078</name>
    <name type="ordered locus">S0080</name>
</gene>
<reference key="1">
    <citation type="journal article" date="2002" name="Nucleic Acids Res.">
        <title>Genome sequence of Shigella flexneri 2a: insights into pathogenicity through comparison with genomes of Escherichia coli K12 and O157.</title>
        <authorList>
            <person name="Jin Q."/>
            <person name="Yuan Z."/>
            <person name="Xu J."/>
            <person name="Wang Y."/>
            <person name="Shen Y."/>
            <person name="Lu W."/>
            <person name="Wang J."/>
            <person name="Liu H."/>
            <person name="Yang J."/>
            <person name="Yang F."/>
            <person name="Zhang X."/>
            <person name="Zhang J."/>
            <person name="Yang G."/>
            <person name="Wu H."/>
            <person name="Qu D."/>
            <person name="Dong J."/>
            <person name="Sun L."/>
            <person name="Xue Y."/>
            <person name="Zhao A."/>
            <person name="Gao Y."/>
            <person name="Zhu J."/>
            <person name="Kan B."/>
            <person name="Ding K."/>
            <person name="Chen S."/>
            <person name="Cheng H."/>
            <person name="Yao Z."/>
            <person name="He B."/>
            <person name="Chen R."/>
            <person name="Ma D."/>
            <person name="Qiang B."/>
            <person name="Wen Y."/>
            <person name="Hou Y."/>
            <person name="Yu J."/>
        </authorList>
    </citation>
    <scope>NUCLEOTIDE SEQUENCE [LARGE SCALE GENOMIC DNA]</scope>
    <source>
        <strain>301 / Serotype 2a</strain>
    </source>
</reference>
<reference key="2">
    <citation type="journal article" date="2003" name="Infect. Immun.">
        <title>Complete genome sequence and comparative genomics of Shigella flexneri serotype 2a strain 2457T.</title>
        <authorList>
            <person name="Wei J."/>
            <person name="Goldberg M.B."/>
            <person name="Burland V."/>
            <person name="Venkatesan M.M."/>
            <person name="Deng W."/>
            <person name="Fournier G."/>
            <person name="Mayhew G.F."/>
            <person name="Plunkett G. III"/>
            <person name="Rose D.J."/>
            <person name="Darling A."/>
            <person name="Mau B."/>
            <person name="Perna N.T."/>
            <person name="Payne S.M."/>
            <person name="Runyen-Janecky L.J."/>
            <person name="Zhou S."/>
            <person name="Schwartz D.C."/>
            <person name="Blattner F.R."/>
        </authorList>
    </citation>
    <scope>NUCLEOTIDE SEQUENCE [LARGE SCALE GENOMIC DNA]</scope>
    <source>
        <strain>ATCC 700930 / 2457T / Serotype 2a</strain>
    </source>
</reference>
<proteinExistence type="inferred from homology"/>
<protein>
    <recommendedName>
        <fullName>Transcriptional regulator MraZ</fullName>
    </recommendedName>
</protein>
<name>MRAZ_SHIFL</name>
<feature type="chain" id="PRO_0000108535" description="Transcriptional regulator MraZ">
    <location>
        <begin position="1"/>
        <end position="152"/>
    </location>
</feature>
<feature type="domain" description="SpoVT-AbrB 1" evidence="2">
    <location>
        <begin position="5"/>
        <end position="52"/>
    </location>
</feature>
<feature type="domain" description="SpoVT-AbrB 2" evidence="2">
    <location>
        <begin position="81"/>
        <end position="124"/>
    </location>
</feature>
<organism>
    <name type="scientific">Shigella flexneri</name>
    <dbReference type="NCBI Taxonomy" id="623"/>
    <lineage>
        <taxon>Bacteria</taxon>
        <taxon>Pseudomonadati</taxon>
        <taxon>Pseudomonadota</taxon>
        <taxon>Gammaproteobacteria</taxon>
        <taxon>Enterobacterales</taxon>
        <taxon>Enterobacteriaceae</taxon>
        <taxon>Shigella</taxon>
    </lineage>
</organism>
<comment type="function">
    <text evidence="1">Negatively regulates its own expression and that of the subsequent genes in the proximal part of the division and cell wall (dcw) gene cluster. Acts by binding directly to DNA. May also regulate the expression of genes outside the dcw cluster.</text>
</comment>
<comment type="subunit">
    <text evidence="1">Forms oligomers.</text>
</comment>
<comment type="subcellular location">
    <subcellularLocation>
        <location evidence="1">Cytoplasm</location>
        <location evidence="1">Nucleoid</location>
    </subcellularLocation>
</comment>
<comment type="similarity">
    <text evidence="1">Belongs to the MraZ family.</text>
</comment>